<comment type="function">
    <text evidence="1">NDH-1 shuttles electrons from an unknown electron donor, via FMN and iron-sulfur (Fe-S) centers, to quinones in the respiratory and/or the photosynthetic chain. The immediate electron acceptor for the enzyme in this species is believed to be plastoquinone. Couples the redox reaction to proton translocation, and thus conserves the redox energy in a proton gradient. Cyanobacterial NDH-1 also plays a role in inorganic carbon-concentration.</text>
</comment>
<comment type="catalytic activity">
    <reaction evidence="1">
        <text>a plastoquinone + NADH + (n+1) H(+)(in) = a plastoquinol + NAD(+) + n H(+)(out)</text>
        <dbReference type="Rhea" id="RHEA:42608"/>
        <dbReference type="Rhea" id="RHEA-COMP:9561"/>
        <dbReference type="Rhea" id="RHEA-COMP:9562"/>
        <dbReference type="ChEBI" id="CHEBI:15378"/>
        <dbReference type="ChEBI" id="CHEBI:17757"/>
        <dbReference type="ChEBI" id="CHEBI:57540"/>
        <dbReference type="ChEBI" id="CHEBI:57945"/>
        <dbReference type="ChEBI" id="CHEBI:62192"/>
    </reaction>
</comment>
<comment type="catalytic activity">
    <reaction evidence="1">
        <text>a plastoquinone + NADPH + (n+1) H(+)(in) = a plastoquinol + NADP(+) + n H(+)(out)</text>
        <dbReference type="Rhea" id="RHEA:42612"/>
        <dbReference type="Rhea" id="RHEA-COMP:9561"/>
        <dbReference type="Rhea" id="RHEA-COMP:9562"/>
        <dbReference type="ChEBI" id="CHEBI:15378"/>
        <dbReference type="ChEBI" id="CHEBI:17757"/>
        <dbReference type="ChEBI" id="CHEBI:57783"/>
        <dbReference type="ChEBI" id="CHEBI:58349"/>
        <dbReference type="ChEBI" id="CHEBI:62192"/>
    </reaction>
</comment>
<comment type="subunit">
    <text evidence="1">NDH-1 can be composed of about 15 different subunits; different subcomplexes with different compositions have been identified which probably have different functions.</text>
</comment>
<comment type="subcellular location">
    <subcellularLocation>
        <location evidence="1">Cellular thylakoid membrane</location>
        <topology evidence="1">Multi-pass membrane protein</topology>
    </subcellularLocation>
</comment>
<comment type="similarity">
    <text evidence="1">Belongs to the complex I subunit 3 family.</text>
</comment>
<reference key="1">
    <citation type="journal article" date="2003" name="Nature">
        <title>Genome divergence in two Prochlorococcus ecotypes reflects oceanic niche differentiation.</title>
        <authorList>
            <person name="Rocap G."/>
            <person name="Larimer F.W."/>
            <person name="Lamerdin J.E."/>
            <person name="Malfatti S."/>
            <person name="Chain P."/>
            <person name="Ahlgren N.A."/>
            <person name="Arellano A."/>
            <person name="Coleman M."/>
            <person name="Hauser L."/>
            <person name="Hess W.R."/>
            <person name="Johnson Z.I."/>
            <person name="Land M.L."/>
            <person name="Lindell D."/>
            <person name="Post A.F."/>
            <person name="Regala W."/>
            <person name="Shah M."/>
            <person name="Shaw S.L."/>
            <person name="Steglich C."/>
            <person name="Sullivan M.B."/>
            <person name="Ting C.S."/>
            <person name="Tolonen A."/>
            <person name="Webb E.A."/>
            <person name="Zinser E.R."/>
            <person name="Chisholm S.W."/>
        </authorList>
    </citation>
    <scope>NUCLEOTIDE SEQUENCE [LARGE SCALE GENOMIC DNA]</scope>
    <source>
        <strain>CCMP1986 / NIES-2087 / MED4</strain>
    </source>
</reference>
<feature type="chain" id="PRO_0000362729" description="NAD(P)H-quinone oxidoreductase subunit 3">
    <location>
        <begin position="1"/>
        <end position="120"/>
    </location>
</feature>
<feature type="transmembrane region" description="Helical" evidence="1">
    <location>
        <begin position="10"/>
        <end position="30"/>
    </location>
</feature>
<feature type="transmembrane region" description="Helical" evidence="1">
    <location>
        <begin position="64"/>
        <end position="84"/>
    </location>
</feature>
<feature type="transmembrane region" description="Helical" evidence="1">
    <location>
        <begin position="89"/>
        <end position="109"/>
    </location>
</feature>
<sequence>MFSLPGYEYFLGFLIIAAAVPILALVTNLIVSPKGRTGERKLTYESGMEPIGGAWIQFNIRYYMFALVFVIFDVETVFLYPWAVAFNRLGLLAFIEALIFITILVIALAYAWRKGALEWS</sequence>
<dbReference type="EC" id="7.1.1.-" evidence="1"/>
<dbReference type="EMBL" id="BX548174">
    <property type="protein sequence ID" value="CAE18753.1"/>
    <property type="molecule type" value="Genomic_DNA"/>
</dbReference>
<dbReference type="RefSeq" id="WP_011131931.1">
    <property type="nucleotide sequence ID" value="NC_005072.1"/>
</dbReference>
<dbReference type="SMR" id="Q7TUF8"/>
<dbReference type="STRING" id="59919.PMM0294"/>
<dbReference type="KEGG" id="pmm:PMM0294"/>
<dbReference type="eggNOG" id="COG0838">
    <property type="taxonomic scope" value="Bacteria"/>
</dbReference>
<dbReference type="HOGENOM" id="CLU_119549_1_1_3"/>
<dbReference type="OrthoDB" id="9791970at2"/>
<dbReference type="Proteomes" id="UP000001026">
    <property type="component" value="Chromosome"/>
</dbReference>
<dbReference type="GO" id="GO:0030964">
    <property type="term" value="C:NADH dehydrogenase complex"/>
    <property type="evidence" value="ECO:0007669"/>
    <property type="project" value="TreeGrafter"/>
</dbReference>
<dbReference type="GO" id="GO:0031676">
    <property type="term" value="C:plasma membrane-derived thylakoid membrane"/>
    <property type="evidence" value="ECO:0007669"/>
    <property type="project" value="UniProtKB-SubCell"/>
</dbReference>
<dbReference type="GO" id="GO:0008137">
    <property type="term" value="F:NADH dehydrogenase (ubiquinone) activity"/>
    <property type="evidence" value="ECO:0007669"/>
    <property type="project" value="InterPro"/>
</dbReference>
<dbReference type="GO" id="GO:0048038">
    <property type="term" value="F:quinone binding"/>
    <property type="evidence" value="ECO:0007669"/>
    <property type="project" value="UniProtKB-KW"/>
</dbReference>
<dbReference type="GO" id="GO:0019684">
    <property type="term" value="P:photosynthesis, light reaction"/>
    <property type="evidence" value="ECO:0007669"/>
    <property type="project" value="UniProtKB-UniRule"/>
</dbReference>
<dbReference type="Gene3D" id="1.20.58.1610">
    <property type="entry name" value="NADH:ubiquinone/plastoquinone oxidoreductase, chain 3"/>
    <property type="match status" value="1"/>
</dbReference>
<dbReference type="HAMAP" id="MF_01394">
    <property type="entry name" value="NDH1_NuoA"/>
    <property type="match status" value="1"/>
</dbReference>
<dbReference type="InterPro" id="IPR023043">
    <property type="entry name" value="NAD(P)H_OxRDtase_bac/plastid"/>
</dbReference>
<dbReference type="InterPro" id="IPR000440">
    <property type="entry name" value="NADH_UbQ/plastoQ_OxRdtase_su3"/>
</dbReference>
<dbReference type="InterPro" id="IPR038430">
    <property type="entry name" value="NDAH_ubi_oxred_su3_sf"/>
</dbReference>
<dbReference type="PANTHER" id="PTHR11058">
    <property type="entry name" value="NADH-UBIQUINONE OXIDOREDUCTASE CHAIN 3"/>
    <property type="match status" value="1"/>
</dbReference>
<dbReference type="PANTHER" id="PTHR11058:SF9">
    <property type="entry name" value="NADH-UBIQUINONE OXIDOREDUCTASE CHAIN 3"/>
    <property type="match status" value="1"/>
</dbReference>
<dbReference type="Pfam" id="PF00507">
    <property type="entry name" value="Oxidored_q4"/>
    <property type="match status" value="1"/>
</dbReference>
<proteinExistence type="inferred from homology"/>
<accession>Q7TUF8</accession>
<organism>
    <name type="scientific">Prochlorococcus marinus subsp. pastoris (strain CCMP1986 / NIES-2087 / MED4)</name>
    <dbReference type="NCBI Taxonomy" id="59919"/>
    <lineage>
        <taxon>Bacteria</taxon>
        <taxon>Bacillati</taxon>
        <taxon>Cyanobacteriota</taxon>
        <taxon>Cyanophyceae</taxon>
        <taxon>Synechococcales</taxon>
        <taxon>Prochlorococcaceae</taxon>
        <taxon>Prochlorococcus</taxon>
    </lineage>
</organism>
<gene>
    <name evidence="1" type="primary">ndhC</name>
    <name type="ordered locus">PMM0294</name>
</gene>
<protein>
    <recommendedName>
        <fullName evidence="1">NAD(P)H-quinone oxidoreductase subunit 3</fullName>
        <ecNumber evidence="1">7.1.1.-</ecNumber>
    </recommendedName>
    <alternativeName>
        <fullName evidence="1">NAD(P)H dehydrogenase subunit 3</fullName>
    </alternativeName>
    <alternativeName>
        <fullName evidence="1">NADH-plastoquinone oxidoreductase subunit 3</fullName>
    </alternativeName>
    <alternativeName>
        <fullName evidence="1">NDH-1 subunit 3</fullName>
        <shortName evidence="1">NDH-C</shortName>
    </alternativeName>
</protein>
<name>NU3C_PROMP</name>
<keyword id="KW-0472">Membrane</keyword>
<keyword id="KW-0520">NAD</keyword>
<keyword id="KW-0521">NADP</keyword>
<keyword id="KW-0618">Plastoquinone</keyword>
<keyword id="KW-0874">Quinone</keyword>
<keyword id="KW-0793">Thylakoid</keyword>
<keyword id="KW-1278">Translocase</keyword>
<keyword id="KW-0812">Transmembrane</keyword>
<keyword id="KW-1133">Transmembrane helix</keyword>
<keyword id="KW-0813">Transport</keyword>
<evidence type="ECO:0000255" key="1">
    <source>
        <dbReference type="HAMAP-Rule" id="MF_01394"/>
    </source>
</evidence>